<name>KAB14_OLDAF</name>
<reference evidence="4" key="1">
    <citation type="journal article" date="2007" name="ChemBioChem">
        <title>The cyclotide fingerprint in Oldenlandia affinis: elucidation of chemically modified, linear and novel macrocyclic peptides.</title>
        <authorList>
            <person name="Plan M.R.R."/>
            <person name="Goeransson U."/>
            <person name="Clark R.J."/>
            <person name="Daly N.L."/>
            <person name="Colgrave M.L."/>
            <person name="Craik D.J."/>
        </authorList>
    </citation>
    <scope>PROTEIN SEQUENCE</scope>
    <scope>MASS SPECTROMETRY</scope>
</reference>
<sequence length="30" mass="3046">GLPVCGESCFGGTCNTPGCACDPWPVCTRD</sequence>
<evidence type="ECO:0000250" key="1">
    <source>
        <dbReference type="UniProtKB" id="P83836"/>
    </source>
</evidence>
<evidence type="ECO:0000255" key="2">
    <source>
        <dbReference type="PROSITE-ProRule" id="PRU00395"/>
    </source>
</evidence>
<evidence type="ECO:0000269" key="3">
    <source>
    </source>
</evidence>
<evidence type="ECO:0000305" key="4"/>
<feature type="peptide" id="PRO_0000294961" description="Kalata-B14" evidence="2 3">
    <location>
        <begin position="1"/>
        <end position="30"/>
    </location>
</feature>
<feature type="disulfide bond" evidence="1 2">
    <location>
        <begin position="5"/>
        <end position="19"/>
    </location>
</feature>
<feature type="disulfide bond" evidence="1 2">
    <location>
        <begin position="9"/>
        <end position="21"/>
    </location>
</feature>
<feature type="disulfide bond" evidence="1 2">
    <location>
        <begin position="14"/>
        <end position="27"/>
    </location>
</feature>
<feature type="cross-link" description="Cyclopeptide (Gly-Asp)" evidence="3">
    <location>
        <begin position="1"/>
        <end position="30"/>
    </location>
</feature>
<proteinExistence type="evidence at protein level"/>
<organism>
    <name type="scientific">Oldenlandia affinis</name>
    <dbReference type="NCBI Taxonomy" id="60225"/>
    <lineage>
        <taxon>Eukaryota</taxon>
        <taxon>Viridiplantae</taxon>
        <taxon>Streptophyta</taxon>
        <taxon>Embryophyta</taxon>
        <taxon>Tracheophyta</taxon>
        <taxon>Spermatophyta</taxon>
        <taxon>Magnoliopsida</taxon>
        <taxon>eudicotyledons</taxon>
        <taxon>Gunneridae</taxon>
        <taxon>Pentapetalae</taxon>
        <taxon>asterids</taxon>
        <taxon>lamiids</taxon>
        <taxon>Gentianales</taxon>
        <taxon>Rubiaceae</taxon>
        <taxon>Rubioideae</taxon>
        <taxon>Spermacoceae</taxon>
        <taxon>Hedyotis-Oldenlandia complex</taxon>
        <taxon>Oldenlandia</taxon>
    </lineage>
</organism>
<protein>
    <recommendedName>
        <fullName>Kalata-B14</fullName>
    </recommendedName>
</protein>
<keyword id="KW-0903">Direct protein sequencing</keyword>
<keyword id="KW-1015">Disulfide bond</keyword>
<keyword id="KW-0960">Knottin</keyword>
<keyword id="KW-0611">Plant defense</keyword>
<accession>P85132</accession>
<dbReference type="SMR" id="P85132"/>
<dbReference type="GO" id="GO:0006952">
    <property type="term" value="P:defense response"/>
    <property type="evidence" value="ECO:0007669"/>
    <property type="project" value="UniProtKB-KW"/>
</dbReference>
<dbReference type="InterPro" id="IPR005535">
    <property type="entry name" value="Cyclotide"/>
</dbReference>
<dbReference type="InterPro" id="IPR012324">
    <property type="entry name" value="Cyclotide_moebius_CS"/>
</dbReference>
<dbReference type="InterPro" id="IPR036146">
    <property type="entry name" value="Cyclotide_sf"/>
</dbReference>
<dbReference type="Pfam" id="PF03784">
    <property type="entry name" value="Cyclotide"/>
    <property type="match status" value="1"/>
</dbReference>
<dbReference type="PIRSF" id="PIRSF037891">
    <property type="entry name" value="Cycloviolacin"/>
    <property type="match status" value="1"/>
</dbReference>
<dbReference type="SUPFAM" id="SSF57038">
    <property type="entry name" value="Cyclotides"/>
    <property type="match status" value="1"/>
</dbReference>
<dbReference type="PROSITE" id="PS51052">
    <property type="entry name" value="CYCLOTIDE"/>
    <property type="match status" value="1"/>
</dbReference>
<dbReference type="PROSITE" id="PS60009">
    <property type="entry name" value="CYCLOTIDE_MOEBIUS"/>
    <property type="match status" value="1"/>
</dbReference>
<comment type="function">
    <text evidence="4">Probably participates in a plant defense mechanism.</text>
</comment>
<comment type="domain">
    <text evidence="1">The presence of a 'disulfide through disulfide knot' structurally defines this protein as a knottin.</text>
</comment>
<comment type="PTM">
    <text evidence="2 3">This is a cyclic peptide.</text>
</comment>
<comment type="mass spectrometry" mass="3022.5" method="Electrospray" evidence="3"/>
<comment type="similarity">
    <text evidence="2">Belongs to the cyclotide family. Moebius subfamily.</text>
</comment>
<comment type="caution">
    <text evidence="3">This peptide is cyclic. The start position was chosen by similarity to OAK1 (kalata-B1) for which the DNA sequence is known.</text>
</comment>